<name>TYPH_ECO8A</name>
<sequence>MFLAQEIIRKKRDGHALSDEEIRFFINGIRDNTISEGQIAALAMTIFFHDMTMPERVSLTMAMRDSGTVLDWKSLHLNGPIVDKHSTGGVGDVTSLMLGPMVAACGGYIPMISGRGLGHTGGTLDKLESIPGFDIFPDDNRFREIIKDVGVAIIGQTSSLAPADKRFYATRDITATVDSIPLITASILAKKLAEGLDALVMDVKVGSGAFMPTYELSEALAEAIVGVANGAGVRTTALLTDMNQVLASSAGNAVEVREAVQFLTGEYRNPRLFDVTMALCVEMLISGKLAKDDAEARAKLQAVLDNGKAAEVFGRMVAAQKGPTDFVENYAKYLPTAMLTKAVYADTEGFVSEMDTRALGMAVVAMGGGRRQASDTIDYSVGFTDMARLGDQVDGQRPLAVIHAKDENSWQEAAKAVKAAIKLADKAPESTPTVYRRISE</sequence>
<dbReference type="EC" id="2.4.2.4" evidence="1"/>
<dbReference type="EMBL" id="CU928160">
    <property type="protein sequence ID" value="CAR01345.1"/>
    <property type="molecule type" value="Genomic_DNA"/>
</dbReference>
<dbReference type="RefSeq" id="WP_000477811.1">
    <property type="nucleotide sequence ID" value="NC_011741.1"/>
</dbReference>
<dbReference type="SMR" id="B7LXU4"/>
<dbReference type="GeneID" id="93777462"/>
<dbReference type="KEGG" id="ecr:ECIAI1_4605"/>
<dbReference type="HOGENOM" id="CLU_025040_0_1_6"/>
<dbReference type="UniPathway" id="UPA00578">
    <property type="reaction ID" value="UER00638"/>
</dbReference>
<dbReference type="GO" id="GO:0005829">
    <property type="term" value="C:cytosol"/>
    <property type="evidence" value="ECO:0007669"/>
    <property type="project" value="TreeGrafter"/>
</dbReference>
<dbReference type="GO" id="GO:0004645">
    <property type="term" value="F:1,4-alpha-oligoglucan phosphorylase activity"/>
    <property type="evidence" value="ECO:0007669"/>
    <property type="project" value="InterPro"/>
</dbReference>
<dbReference type="GO" id="GO:0009032">
    <property type="term" value="F:thymidine phosphorylase activity"/>
    <property type="evidence" value="ECO:0007669"/>
    <property type="project" value="UniProtKB-UniRule"/>
</dbReference>
<dbReference type="GO" id="GO:0006206">
    <property type="term" value="P:pyrimidine nucleobase metabolic process"/>
    <property type="evidence" value="ECO:0007669"/>
    <property type="project" value="InterPro"/>
</dbReference>
<dbReference type="GO" id="GO:0046104">
    <property type="term" value="P:thymidine metabolic process"/>
    <property type="evidence" value="ECO:0007669"/>
    <property type="project" value="UniProtKB-UniRule"/>
</dbReference>
<dbReference type="FunFam" id="3.40.1030.10:FF:000001">
    <property type="entry name" value="Thymidine phosphorylase"/>
    <property type="match status" value="1"/>
</dbReference>
<dbReference type="FunFam" id="3.90.1170.30:FF:000001">
    <property type="entry name" value="Thymidine phosphorylase"/>
    <property type="match status" value="1"/>
</dbReference>
<dbReference type="Gene3D" id="3.40.1030.10">
    <property type="entry name" value="Nucleoside phosphorylase/phosphoribosyltransferase catalytic domain"/>
    <property type="match status" value="1"/>
</dbReference>
<dbReference type="Gene3D" id="3.90.1170.30">
    <property type="entry name" value="Pyrimidine nucleoside phosphorylase-like, C-terminal domain"/>
    <property type="match status" value="1"/>
</dbReference>
<dbReference type="Gene3D" id="1.20.970.10">
    <property type="entry name" value="Transferase, Pyrimidine Nucleoside Phosphorylase, Chain C"/>
    <property type="match status" value="1"/>
</dbReference>
<dbReference type="HAMAP" id="MF_01628">
    <property type="entry name" value="Thymid_phosp"/>
    <property type="match status" value="1"/>
</dbReference>
<dbReference type="InterPro" id="IPR000312">
    <property type="entry name" value="Glycosyl_Trfase_fam3"/>
</dbReference>
<dbReference type="InterPro" id="IPR017459">
    <property type="entry name" value="Glycosyl_Trfase_fam3_N_dom"/>
</dbReference>
<dbReference type="InterPro" id="IPR036320">
    <property type="entry name" value="Glycosyl_Trfase_fam3_N_dom_sf"/>
</dbReference>
<dbReference type="InterPro" id="IPR035902">
    <property type="entry name" value="Nuc_phospho_transferase"/>
</dbReference>
<dbReference type="InterPro" id="IPR036566">
    <property type="entry name" value="PYNP-like_C_sf"/>
</dbReference>
<dbReference type="InterPro" id="IPR013102">
    <property type="entry name" value="PYNP_C"/>
</dbReference>
<dbReference type="InterPro" id="IPR018090">
    <property type="entry name" value="Pyrmidine_PPas_bac/euk"/>
</dbReference>
<dbReference type="InterPro" id="IPR017872">
    <property type="entry name" value="Pyrmidine_PPase_CS"/>
</dbReference>
<dbReference type="InterPro" id="IPR000053">
    <property type="entry name" value="Thymidine/pyrmidine_PPase"/>
</dbReference>
<dbReference type="InterPro" id="IPR013465">
    <property type="entry name" value="Thymidine_Pase"/>
</dbReference>
<dbReference type="NCBIfam" id="NF004490">
    <property type="entry name" value="PRK05820.1"/>
    <property type="match status" value="1"/>
</dbReference>
<dbReference type="NCBIfam" id="TIGR02643">
    <property type="entry name" value="T_phosphoryl"/>
    <property type="match status" value="1"/>
</dbReference>
<dbReference type="NCBIfam" id="TIGR02644">
    <property type="entry name" value="Y_phosphoryl"/>
    <property type="match status" value="1"/>
</dbReference>
<dbReference type="PANTHER" id="PTHR10515">
    <property type="entry name" value="THYMIDINE PHOSPHORYLASE"/>
    <property type="match status" value="1"/>
</dbReference>
<dbReference type="PANTHER" id="PTHR10515:SF0">
    <property type="entry name" value="THYMIDINE PHOSPHORYLASE"/>
    <property type="match status" value="1"/>
</dbReference>
<dbReference type="Pfam" id="PF02885">
    <property type="entry name" value="Glycos_trans_3N"/>
    <property type="match status" value="1"/>
</dbReference>
<dbReference type="Pfam" id="PF00591">
    <property type="entry name" value="Glycos_transf_3"/>
    <property type="match status" value="1"/>
</dbReference>
<dbReference type="Pfam" id="PF07831">
    <property type="entry name" value="PYNP_C"/>
    <property type="match status" value="1"/>
</dbReference>
<dbReference type="PIRSF" id="PIRSF000478">
    <property type="entry name" value="TP_PyNP"/>
    <property type="match status" value="1"/>
</dbReference>
<dbReference type="SMART" id="SM00941">
    <property type="entry name" value="PYNP_C"/>
    <property type="match status" value="1"/>
</dbReference>
<dbReference type="SUPFAM" id="SSF52418">
    <property type="entry name" value="Nucleoside phosphorylase/phosphoribosyltransferase catalytic domain"/>
    <property type="match status" value="1"/>
</dbReference>
<dbReference type="SUPFAM" id="SSF47648">
    <property type="entry name" value="Nucleoside phosphorylase/phosphoribosyltransferase N-terminal domain"/>
    <property type="match status" value="1"/>
</dbReference>
<dbReference type="SUPFAM" id="SSF54680">
    <property type="entry name" value="Pyrimidine nucleoside phosphorylase C-terminal domain"/>
    <property type="match status" value="1"/>
</dbReference>
<dbReference type="PROSITE" id="PS00647">
    <property type="entry name" value="THYMID_PHOSPHORYLASE"/>
    <property type="match status" value="1"/>
</dbReference>
<comment type="function">
    <text evidence="1">The enzymes which catalyze the reversible phosphorolysis of pyrimidine nucleosides are involved in the degradation of these compounds and in their utilization as carbon and energy sources, or in the rescue of pyrimidine bases for nucleotide synthesis.</text>
</comment>
<comment type="catalytic activity">
    <reaction evidence="1">
        <text>thymidine + phosphate = 2-deoxy-alpha-D-ribose 1-phosphate + thymine</text>
        <dbReference type="Rhea" id="RHEA:16037"/>
        <dbReference type="ChEBI" id="CHEBI:17748"/>
        <dbReference type="ChEBI" id="CHEBI:17821"/>
        <dbReference type="ChEBI" id="CHEBI:43474"/>
        <dbReference type="ChEBI" id="CHEBI:57259"/>
        <dbReference type="EC" id="2.4.2.4"/>
    </reaction>
</comment>
<comment type="pathway">
    <text evidence="1">Pyrimidine metabolism; dTMP biosynthesis via salvage pathway; dTMP from thymine: step 1/2.</text>
</comment>
<comment type="subunit">
    <text evidence="1">Homodimer.</text>
</comment>
<comment type="similarity">
    <text evidence="1">Belongs to the thymidine/pyrimidine-nucleoside phosphorylase family.</text>
</comment>
<keyword id="KW-0328">Glycosyltransferase</keyword>
<keyword id="KW-0808">Transferase</keyword>
<evidence type="ECO:0000255" key="1">
    <source>
        <dbReference type="HAMAP-Rule" id="MF_01628"/>
    </source>
</evidence>
<organism>
    <name type="scientific">Escherichia coli O8 (strain IAI1)</name>
    <dbReference type="NCBI Taxonomy" id="585034"/>
    <lineage>
        <taxon>Bacteria</taxon>
        <taxon>Pseudomonadati</taxon>
        <taxon>Pseudomonadota</taxon>
        <taxon>Gammaproteobacteria</taxon>
        <taxon>Enterobacterales</taxon>
        <taxon>Enterobacteriaceae</taxon>
        <taxon>Escherichia</taxon>
    </lineage>
</organism>
<gene>
    <name evidence="1" type="primary">deoA</name>
    <name type="ordered locus">ECIAI1_4605</name>
</gene>
<feature type="chain" id="PRO_1000186255" description="Thymidine phosphorylase">
    <location>
        <begin position="1"/>
        <end position="440"/>
    </location>
</feature>
<accession>B7LXU4</accession>
<reference key="1">
    <citation type="journal article" date="2009" name="PLoS Genet.">
        <title>Organised genome dynamics in the Escherichia coli species results in highly diverse adaptive paths.</title>
        <authorList>
            <person name="Touchon M."/>
            <person name="Hoede C."/>
            <person name="Tenaillon O."/>
            <person name="Barbe V."/>
            <person name="Baeriswyl S."/>
            <person name="Bidet P."/>
            <person name="Bingen E."/>
            <person name="Bonacorsi S."/>
            <person name="Bouchier C."/>
            <person name="Bouvet O."/>
            <person name="Calteau A."/>
            <person name="Chiapello H."/>
            <person name="Clermont O."/>
            <person name="Cruveiller S."/>
            <person name="Danchin A."/>
            <person name="Diard M."/>
            <person name="Dossat C."/>
            <person name="Karoui M.E."/>
            <person name="Frapy E."/>
            <person name="Garry L."/>
            <person name="Ghigo J.M."/>
            <person name="Gilles A.M."/>
            <person name="Johnson J."/>
            <person name="Le Bouguenec C."/>
            <person name="Lescat M."/>
            <person name="Mangenot S."/>
            <person name="Martinez-Jehanne V."/>
            <person name="Matic I."/>
            <person name="Nassif X."/>
            <person name="Oztas S."/>
            <person name="Petit M.A."/>
            <person name="Pichon C."/>
            <person name="Rouy Z."/>
            <person name="Ruf C.S."/>
            <person name="Schneider D."/>
            <person name="Tourret J."/>
            <person name="Vacherie B."/>
            <person name="Vallenet D."/>
            <person name="Medigue C."/>
            <person name="Rocha E.P.C."/>
            <person name="Denamur E."/>
        </authorList>
    </citation>
    <scope>NUCLEOTIDE SEQUENCE [LARGE SCALE GENOMIC DNA]</scope>
    <source>
        <strain>IAI1</strain>
    </source>
</reference>
<protein>
    <recommendedName>
        <fullName evidence="1">Thymidine phosphorylase</fullName>
        <ecNumber evidence="1">2.4.2.4</ecNumber>
    </recommendedName>
    <alternativeName>
        <fullName evidence="1">TdRPase</fullName>
    </alternativeName>
</protein>
<proteinExistence type="inferred from homology"/>